<dbReference type="EMBL" id="X17019">
    <property type="protein sequence ID" value="CAA34885.1"/>
    <property type="molecule type" value="mRNA"/>
</dbReference>
<dbReference type="EMBL" id="BC146208">
    <property type="protein sequence ID" value="AAI46209.1"/>
    <property type="molecule type" value="mRNA"/>
</dbReference>
<dbReference type="PIR" id="S09202">
    <property type="entry name" value="PWBOD"/>
</dbReference>
<dbReference type="RefSeq" id="NP_788843.1">
    <property type="nucleotide sequence ID" value="NM_176670.2"/>
</dbReference>
<dbReference type="PDB" id="1E79">
    <property type="method" value="X-ray"/>
    <property type="resolution" value="2.40 A"/>
    <property type="chains" value="H=23-168"/>
</dbReference>
<dbReference type="PDB" id="1H8E">
    <property type="method" value="X-ray"/>
    <property type="resolution" value="2.00 A"/>
    <property type="chains" value="H=23-168"/>
</dbReference>
<dbReference type="PDB" id="2CK3">
    <property type="method" value="X-ray"/>
    <property type="resolution" value="1.90 A"/>
    <property type="chains" value="H=23-168"/>
</dbReference>
<dbReference type="PDB" id="2JDI">
    <property type="method" value="X-ray"/>
    <property type="resolution" value="1.90 A"/>
    <property type="chains" value="H=23-168"/>
</dbReference>
<dbReference type="PDB" id="2V7Q">
    <property type="method" value="X-ray"/>
    <property type="resolution" value="2.10 A"/>
    <property type="chains" value="H=23-168"/>
</dbReference>
<dbReference type="PDB" id="2W6H">
    <property type="method" value="X-ray"/>
    <property type="resolution" value="5.00 A"/>
    <property type="chains" value="H=1-168"/>
</dbReference>
<dbReference type="PDB" id="2W6I">
    <property type="method" value="X-ray"/>
    <property type="resolution" value="4.00 A"/>
    <property type="chains" value="H=1-168"/>
</dbReference>
<dbReference type="PDB" id="2W6J">
    <property type="method" value="X-ray"/>
    <property type="resolution" value="3.84 A"/>
    <property type="chains" value="H=1-168"/>
</dbReference>
<dbReference type="PDB" id="2WSS">
    <property type="method" value="X-ray"/>
    <property type="resolution" value="3.20 A"/>
    <property type="chains" value="H/Q=23-168"/>
</dbReference>
<dbReference type="PDB" id="2XND">
    <property type="method" value="X-ray"/>
    <property type="resolution" value="3.50 A"/>
    <property type="chains" value="H=37-167"/>
</dbReference>
<dbReference type="PDB" id="4ASU">
    <property type="method" value="X-ray"/>
    <property type="resolution" value="2.60 A"/>
    <property type="chains" value="H=23-168"/>
</dbReference>
<dbReference type="PDB" id="4YXW">
    <property type="method" value="X-ray"/>
    <property type="resolution" value="3.10 A"/>
    <property type="chains" value="H=23-168"/>
</dbReference>
<dbReference type="PDB" id="5ARA">
    <property type="method" value="EM"/>
    <property type="resolution" value="6.70 A"/>
    <property type="chains" value="H=23-168"/>
</dbReference>
<dbReference type="PDB" id="5ARE">
    <property type="method" value="EM"/>
    <property type="resolution" value="7.40 A"/>
    <property type="chains" value="H=23-168"/>
</dbReference>
<dbReference type="PDB" id="5ARH">
    <property type="method" value="EM"/>
    <property type="resolution" value="7.20 A"/>
    <property type="chains" value="H=23-168"/>
</dbReference>
<dbReference type="PDB" id="5ARI">
    <property type="method" value="EM"/>
    <property type="resolution" value="7.40 A"/>
    <property type="chains" value="H=23-168"/>
</dbReference>
<dbReference type="PDB" id="5FIJ">
    <property type="method" value="EM"/>
    <property type="resolution" value="7.40 A"/>
    <property type="chains" value="H=23-168"/>
</dbReference>
<dbReference type="PDB" id="5FIK">
    <property type="method" value="EM"/>
    <property type="resolution" value="6.40 A"/>
    <property type="chains" value="H=23-168"/>
</dbReference>
<dbReference type="PDB" id="5FIL">
    <property type="method" value="EM"/>
    <property type="resolution" value="7.10 A"/>
    <property type="chains" value="H=23-168"/>
</dbReference>
<dbReference type="PDB" id="6YY0">
    <property type="method" value="EM"/>
    <property type="resolution" value="3.23 A"/>
    <property type="chains" value="H=23-168"/>
</dbReference>
<dbReference type="PDB" id="6Z1R">
    <property type="method" value="EM"/>
    <property type="resolution" value="3.29 A"/>
    <property type="chains" value="H=23-168"/>
</dbReference>
<dbReference type="PDB" id="6Z1U">
    <property type="method" value="EM"/>
    <property type="resolution" value="3.47 A"/>
    <property type="chains" value="H=23-168"/>
</dbReference>
<dbReference type="PDB" id="6ZG7">
    <property type="method" value="EM"/>
    <property type="resolution" value="3.49 A"/>
    <property type="chains" value="H=23-168"/>
</dbReference>
<dbReference type="PDB" id="6ZG8">
    <property type="method" value="EM"/>
    <property type="resolution" value="3.49 A"/>
    <property type="chains" value="H=23-168"/>
</dbReference>
<dbReference type="PDB" id="6ZIK">
    <property type="method" value="EM"/>
    <property type="resolution" value="3.66 A"/>
    <property type="chains" value="H=23-168"/>
</dbReference>
<dbReference type="PDB" id="6ZPO">
    <property type="method" value="EM"/>
    <property type="resolution" value="4.00 A"/>
    <property type="chains" value="H=23-168"/>
</dbReference>
<dbReference type="PDB" id="6ZQM">
    <property type="method" value="EM"/>
    <property type="resolution" value="3.29 A"/>
    <property type="chains" value="H=23-168"/>
</dbReference>
<dbReference type="PDB" id="6ZQN">
    <property type="method" value="EM"/>
    <property type="resolution" value="4.00 A"/>
    <property type="chains" value="H=23-168"/>
</dbReference>
<dbReference type="PDB" id="7AJB">
    <property type="method" value="EM"/>
    <property type="resolution" value="9.20 A"/>
    <property type="chains" value="AH/H=23-168"/>
</dbReference>
<dbReference type="PDB" id="7AJC">
    <property type="method" value="EM"/>
    <property type="resolution" value="11.90 A"/>
    <property type="chains" value="AH/H=23-168"/>
</dbReference>
<dbReference type="PDB" id="7AJD">
    <property type="method" value="EM"/>
    <property type="resolution" value="9.00 A"/>
    <property type="chains" value="AH/H=23-168"/>
</dbReference>
<dbReference type="PDB" id="7AJE">
    <property type="method" value="EM"/>
    <property type="resolution" value="9.40 A"/>
    <property type="chains" value="AH/H=23-168"/>
</dbReference>
<dbReference type="PDB" id="7AJF">
    <property type="method" value="EM"/>
    <property type="resolution" value="8.45 A"/>
    <property type="chains" value="AH/H=23-168"/>
</dbReference>
<dbReference type="PDB" id="7AJG">
    <property type="method" value="EM"/>
    <property type="resolution" value="10.70 A"/>
    <property type="chains" value="AH/H=23-168"/>
</dbReference>
<dbReference type="PDB" id="7AJH">
    <property type="method" value="EM"/>
    <property type="resolution" value="9.70 A"/>
    <property type="chains" value="AH/H=23-168"/>
</dbReference>
<dbReference type="PDB" id="7AJI">
    <property type="method" value="EM"/>
    <property type="resolution" value="11.40 A"/>
    <property type="chains" value="AH/H=23-168"/>
</dbReference>
<dbReference type="PDB" id="7AJJ">
    <property type="method" value="EM"/>
    <property type="resolution" value="13.10 A"/>
    <property type="chains" value="AH/H=23-168"/>
</dbReference>
<dbReference type="PDBsum" id="1E79"/>
<dbReference type="PDBsum" id="1H8E"/>
<dbReference type="PDBsum" id="2CK3"/>
<dbReference type="PDBsum" id="2JDI"/>
<dbReference type="PDBsum" id="2V7Q"/>
<dbReference type="PDBsum" id="2W6H"/>
<dbReference type="PDBsum" id="2W6I"/>
<dbReference type="PDBsum" id="2W6J"/>
<dbReference type="PDBsum" id="2WSS"/>
<dbReference type="PDBsum" id="2XND"/>
<dbReference type="PDBsum" id="4ASU"/>
<dbReference type="PDBsum" id="4YXW"/>
<dbReference type="PDBsum" id="5ARA"/>
<dbReference type="PDBsum" id="5ARE"/>
<dbReference type="PDBsum" id="5ARH"/>
<dbReference type="PDBsum" id="5ARI"/>
<dbReference type="PDBsum" id="5FIJ"/>
<dbReference type="PDBsum" id="5FIK"/>
<dbReference type="PDBsum" id="5FIL"/>
<dbReference type="PDBsum" id="6YY0"/>
<dbReference type="PDBsum" id="6Z1R"/>
<dbReference type="PDBsum" id="6Z1U"/>
<dbReference type="PDBsum" id="6ZG7"/>
<dbReference type="PDBsum" id="6ZG8"/>
<dbReference type="PDBsum" id="6ZIK"/>
<dbReference type="PDBsum" id="6ZPO"/>
<dbReference type="PDBsum" id="6ZQM"/>
<dbReference type="PDBsum" id="6ZQN"/>
<dbReference type="PDBsum" id="7AJB"/>
<dbReference type="PDBsum" id="7AJC"/>
<dbReference type="PDBsum" id="7AJD"/>
<dbReference type="PDBsum" id="7AJE"/>
<dbReference type="PDBsum" id="7AJF"/>
<dbReference type="PDBsum" id="7AJG"/>
<dbReference type="PDBsum" id="7AJH"/>
<dbReference type="PDBsum" id="7AJI"/>
<dbReference type="PDBsum" id="7AJJ"/>
<dbReference type="EMDB" id="EMD-11001"/>
<dbReference type="EMDB" id="EMD-11039"/>
<dbReference type="EMDB" id="EMD-11040"/>
<dbReference type="EMDB" id="EMD-11195"/>
<dbReference type="EMDB" id="EMD-11196"/>
<dbReference type="EMDB" id="EMD-11227"/>
<dbReference type="EMDB" id="EMD-11342"/>
<dbReference type="EMDB" id="EMD-11368"/>
<dbReference type="EMDB" id="EMD-11369"/>
<dbReference type="EMDB" id="EMD-11428"/>
<dbReference type="EMDB" id="EMD-11429"/>
<dbReference type="EMDB" id="EMD-11430"/>
<dbReference type="SMR" id="P05630"/>
<dbReference type="CORUM" id="P05630"/>
<dbReference type="DIP" id="DIP-39022N"/>
<dbReference type="FunCoup" id="P05630">
    <property type="interactions" value="2594"/>
</dbReference>
<dbReference type="IntAct" id="P05630">
    <property type="interactions" value="5"/>
</dbReference>
<dbReference type="MINT" id="P05630"/>
<dbReference type="STRING" id="9913.ENSBTAP00000000721"/>
<dbReference type="BindingDB" id="P05630"/>
<dbReference type="ChEMBL" id="CHEMBL612444"/>
<dbReference type="GlyGen" id="P05630">
    <property type="glycosylation" value="1 site, 1 O-linked glycan (1 site)"/>
</dbReference>
<dbReference type="PaxDb" id="9913-ENSBTAP00000000721"/>
<dbReference type="PeptideAtlas" id="P05630"/>
<dbReference type="Ensembl" id="ENSBTAT00000000721.3">
    <property type="protein sequence ID" value="ENSBTAP00000000721.2"/>
    <property type="gene ID" value="ENSBTAG00000000550.3"/>
</dbReference>
<dbReference type="GeneID" id="338081"/>
<dbReference type="KEGG" id="bta:338081"/>
<dbReference type="CTD" id="513"/>
<dbReference type="VEuPathDB" id="HostDB:ENSBTAG00000000550"/>
<dbReference type="VGNC" id="VGNC:26302">
    <property type="gene designation" value="ATP5F1D"/>
</dbReference>
<dbReference type="eggNOG" id="KOG1758">
    <property type="taxonomic scope" value="Eukaryota"/>
</dbReference>
<dbReference type="GeneTree" id="ENSGT00390000017576"/>
<dbReference type="HOGENOM" id="CLU_084338_0_1_1"/>
<dbReference type="InParanoid" id="P05630"/>
<dbReference type="OMA" id="PHQTIYR"/>
<dbReference type="OrthoDB" id="270171at2759"/>
<dbReference type="TreeFam" id="TF313029"/>
<dbReference type="Reactome" id="R-BTA-163210">
    <property type="pathway name" value="Formation of ATP by chemiosmotic coupling"/>
</dbReference>
<dbReference type="Reactome" id="R-BTA-8949613">
    <property type="pathway name" value="Cristae formation"/>
</dbReference>
<dbReference type="EvolutionaryTrace" id="P05630"/>
<dbReference type="PRO" id="PR:P05630"/>
<dbReference type="Proteomes" id="UP000009136">
    <property type="component" value="Chromosome 7"/>
</dbReference>
<dbReference type="Bgee" id="ENSBTAG00000000550">
    <property type="expression patterns" value="Expressed in laryngeal cartilage and 107 other cell types or tissues"/>
</dbReference>
<dbReference type="GO" id="GO:0005740">
    <property type="term" value="C:mitochondrial envelope"/>
    <property type="evidence" value="ECO:0000314"/>
    <property type="project" value="MGI"/>
</dbReference>
<dbReference type="GO" id="GO:0005743">
    <property type="term" value="C:mitochondrial inner membrane"/>
    <property type="evidence" value="ECO:0007669"/>
    <property type="project" value="UniProtKB-SubCell"/>
</dbReference>
<dbReference type="GO" id="GO:0005739">
    <property type="term" value="C:mitochondrion"/>
    <property type="evidence" value="ECO:0000305"/>
    <property type="project" value="UniProtKB"/>
</dbReference>
<dbReference type="GO" id="GO:0045259">
    <property type="term" value="C:proton-transporting ATP synthase complex"/>
    <property type="evidence" value="ECO:0000314"/>
    <property type="project" value="UniProtKB"/>
</dbReference>
<dbReference type="GO" id="GO:0015078">
    <property type="term" value="F:proton transmembrane transporter activity"/>
    <property type="evidence" value="ECO:0000314"/>
    <property type="project" value="MGI"/>
</dbReference>
<dbReference type="GO" id="GO:0046933">
    <property type="term" value="F:proton-transporting ATP synthase activity, rotational mechanism"/>
    <property type="evidence" value="ECO:0007669"/>
    <property type="project" value="Ensembl"/>
</dbReference>
<dbReference type="GO" id="GO:0005198">
    <property type="term" value="F:structural molecule activity"/>
    <property type="evidence" value="ECO:0000250"/>
    <property type="project" value="UniProtKB"/>
</dbReference>
<dbReference type="GO" id="GO:0009060">
    <property type="term" value="P:aerobic respiration"/>
    <property type="evidence" value="ECO:0000250"/>
    <property type="project" value="UniProtKB"/>
</dbReference>
<dbReference type="GO" id="GO:0033615">
    <property type="term" value="P:mitochondrial proton-transporting ATP synthase complex assembly"/>
    <property type="evidence" value="ECO:0000250"/>
    <property type="project" value="UniProtKB"/>
</dbReference>
<dbReference type="GO" id="GO:0015986">
    <property type="term" value="P:proton motive force-driven ATP synthesis"/>
    <property type="evidence" value="ECO:0000318"/>
    <property type="project" value="GO_Central"/>
</dbReference>
<dbReference type="GO" id="GO:0042776">
    <property type="term" value="P:proton motive force-driven mitochondrial ATP synthesis"/>
    <property type="evidence" value="ECO:0007669"/>
    <property type="project" value="Ensembl"/>
</dbReference>
<dbReference type="GO" id="GO:1902600">
    <property type="term" value="P:proton transmembrane transport"/>
    <property type="evidence" value="ECO:0000314"/>
    <property type="project" value="MGI"/>
</dbReference>
<dbReference type="CDD" id="cd12152">
    <property type="entry name" value="F1-ATPase_delta"/>
    <property type="match status" value="1"/>
</dbReference>
<dbReference type="FunFam" id="1.20.5.440:FF:000002">
    <property type="entry name" value="ATP synthase subunit delta, mitochondrial"/>
    <property type="match status" value="1"/>
</dbReference>
<dbReference type="FunFam" id="2.60.15.10:FF:000004">
    <property type="entry name" value="ATP synthase subunit delta, mitochondrial"/>
    <property type="match status" value="1"/>
</dbReference>
<dbReference type="Gene3D" id="1.20.5.440">
    <property type="entry name" value="ATP synthase delta/epsilon subunit, C-terminal domain"/>
    <property type="match status" value="1"/>
</dbReference>
<dbReference type="Gene3D" id="2.60.15.10">
    <property type="entry name" value="F0F1 ATP synthase delta/epsilon subunit, N-terminal"/>
    <property type="match status" value="1"/>
</dbReference>
<dbReference type="HAMAP" id="MF_00530">
    <property type="entry name" value="ATP_synth_epsil_bac"/>
    <property type="match status" value="1"/>
</dbReference>
<dbReference type="InterPro" id="IPR036794">
    <property type="entry name" value="ATP_F1_dsu/esu_C_sf"/>
</dbReference>
<dbReference type="InterPro" id="IPR001469">
    <property type="entry name" value="ATP_synth_F1_dsu/esu"/>
</dbReference>
<dbReference type="InterPro" id="IPR020546">
    <property type="entry name" value="ATP_synth_F1_dsu/esu_N"/>
</dbReference>
<dbReference type="InterPro" id="IPR048937">
    <property type="entry name" value="ATPD_C_metazoa"/>
</dbReference>
<dbReference type="InterPro" id="IPR036771">
    <property type="entry name" value="ATPsynth_dsu/esu_N"/>
</dbReference>
<dbReference type="NCBIfam" id="TIGR01216">
    <property type="entry name" value="ATP_synt_epsi"/>
    <property type="match status" value="1"/>
</dbReference>
<dbReference type="PANTHER" id="PTHR13822">
    <property type="entry name" value="ATP SYNTHASE DELTA/EPSILON CHAIN"/>
    <property type="match status" value="1"/>
</dbReference>
<dbReference type="PANTHER" id="PTHR13822:SF7">
    <property type="entry name" value="ATP SYNTHASE SUBUNIT DELTA, MITOCHONDRIAL"/>
    <property type="match status" value="1"/>
</dbReference>
<dbReference type="Pfam" id="PF02823">
    <property type="entry name" value="ATP-synt_DE_N"/>
    <property type="match status" value="1"/>
</dbReference>
<dbReference type="Pfam" id="PF21335">
    <property type="entry name" value="ATPD_C_metazoa"/>
    <property type="match status" value="1"/>
</dbReference>
<dbReference type="SUPFAM" id="SSF46604">
    <property type="entry name" value="Epsilon subunit of F1F0-ATP synthase C-terminal domain"/>
    <property type="match status" value="1"/>
</dbReference>
<dbReference type="SUPFAM" id="SSF51344">
    <property type="entry name" value="Epsilon subunit of F1F0-ATP synthase N-terminal domain"/>
    <property type="match status" value="1"/>
</dbReference>
<gene>
    <name evidence="2" type="primary">ATP5F1D</name>
    <name type="synonym">ATP5D</name>
</gene>
<comment type="function">
    <text evidence="1 2">Subunit delta, of the mitochondrial membrane ATP synthase complex (F(1)F(0) ATP synthase or Complex V) that produces ATP from ADP in the presence of a proton gradient across the membrane which is generated by electron transport complexes of the respiratory chain. ATP synthase complex consist of a soluble F(1) head domain - the catalytic core - and a membrane F(1) domain - the membrane proton channel. These two domains are linked by a central stalk rotating inside the F(1) region and a stationary peripheral stalk. During catalysis, ATP synthesis in the catalytic domain of F(1) is coupled via a rotary mechanism of the central stalk subunits to proton translocation (By similarity). In vivo, can only synthesize ATP although its ATP hydrolase activity can be activated artificially in vitro (By similarity). With the central stalk subunit gamma, is essential for the biogenesis of F(1) catalytic part of the ATP synthase complex namely in the formation of F1 assembly intermediate (By similarity).</text>
</comment>
<comment type="subunit">
    <text evidence="2 4 5 7">Component of the ATP synthase complex composed at least of ATP5F1A/subunit alpha, ATP5F1B/subunit beta, ATP5MC1/subunit c (homooctomer), MT-ATP6/subunit a, MT-ATP8/subunit 8, ATP5ME/subunit e, ATP5MF/subunit f, ATP5MG/subunit g, ATP5MK/subunit k, ATP5MJ/subunit j, ATP5F1C/subunit gamma, ATP5F1D/subunit delta, ATP5F1E/subunit epsilon, ATP5PF/subunit F6, ATP5PB/subunit b, ATP5PD/subunit d, ATP5PO/subunit OSCP (PubMed:17570365, PubMed:25851905). ATP synthase complex consists of a soluble F(1) head domain (subunits alpha(3) and beta(3)) - the catalytic core - and a membrane F(0) domain - the membrane proton channel (subunits c, a, 8, e, f, g, k and j). These two domains are linked by a central stalk (subunits gamma, delta, and epsilon) rotating inside the F1 region and a stationary peripheral stalk (subunits F6, b, d, and OSCP) (By similarity). Component of a complex composed at least by ATPIF1, ATP5F1A, ATP5F1B, ATP5F1C AND ATP5F1E (PubMed:17895376).</text>
</comment>
<comment type="subcellular location">
    <subcellularLocation>
        <location>Mitochondrion</location>
    </subcellularLocation>
    <subcellularLocation>
        <location>Mitochondrion inner membrane</location>
    </subcellularLocation>
</comment>
<comment type="similarity">
    <text evidence="9">Belongs to the ATPase epsilon chain family.</text>
</comment>
<sequence length="168" mass="17612">MLPSALLRRPGLGRLVRQVRLYAEAAAAQAPAAGPGQMSFTFASPTQVFFNSANVRQVDVPTQTGAFGILAAHVPTLQVLRPGLVVVHAEDGTTSKYFVSSGSVTVNADSSVQLLAEEAVTLDMLDLGAAKANLEKAQSELLGAADEATRAEIQIRIEANEALVKALE</sequence>
<feature type="transit peptide" description="Mitochondrion" evidence="6 8">
    <location>
        <begin position="1"/>
        <end position="22"/>
    </location>
</feature>
<feature type="chain" id="PRO_0000002660" description="ATP synthase F(1) complex subunit delta, mitochondrial">
    <location>
        <begin position="23"/>
        <end position="168"/>
    </location>
</feature>
<feature type="modified residue" description="N6-acetyllysine; alternate" evidence="3">
    <location>
        <position position="136"/>
    </location>
</feature>
<feature type="modified residue" description="N6-succinyllysine; alternate" evidence="3">
    <location>
        <position position="136"/>
    </location>
</feature>
<feature type="modified residue" description="N6-acetyllysine; alternate" evidence="3">
    <location>
        <position position="165"/>
    </location>
</feature>
<feature type="modified residue" description="N6-succinyllysine; alternate" evidence="3">
    <location>
        <position position="165"/>
    </location>
</feature>
<feature type="strand" evidence="10">
    <location>
        <begin position="40"/>
        <end position="43"/>
    </location>
</feature>
<feature type="strand" evidence="10">
    <location>
        <begin position="48"/>
        <end position="53"/>
    </location>
</feature>
<feature type="strand" evidence="10">
    <location>
        <begin position="56"/>
        <end position="60"/>
    </location>
</feature>
<feature type="strand" evidence="11">
    <location>
        <begin position="62"/>
        <end position="64"/>
    </location>
</feature>
<feature type="strand" evidence="10">
    <location>
        <begin position="67"/>
        <end position="69"/>
    </location>
</feature>
<feature type="strand" evidence="10">
    <location>
        <begin position="76"/>
        <end position="80"/>
    </location>
</feature>
<feature type="strand" evidence="10">
    <location>
        <begin position="82"/>
        <end position="88"/>
    </location>
</feature>
<feature type="strand" evidence="10">
    <location>
        <begin position="90"/>
        <end position="92"/>
    </location>
</feature>
<feature type="strand" evidence="10">
    <location>
        <begin position="94"/>
        <end position="99"/>
    </location>
</feature>
<feature type="strand" evidence="10">
    <location>
        <begin position="101"/>
        <end position="106"/>
    </location>
</feature>
<feature type="strand" evidence="10">
    <location>
        <begin position="112"/>
        <end position="118"/>
    </location>
</feature>
<feature type="helix" evidence="10">
    <location>
        <begin position="122"/>
        <end position="124"/>
    </location>
</feature>
<feature type="helix" evidence="10">
    <location>
        <begin position="128"/>
        <end position="142"/>
    </location>
</feature>
<feature type="helix" evidence="10">
    <location>
        <begin position="147"/>
        <end position="167"/>
    </location>
</feature>
<accession>P05630</accession>
<accession>A6H7D8</accession>
<reference key="1">
    <citation type="journal article" date="1990" name="Biochem. J.">
        <title>The delta-subunit of ATP synthase from bovine heart mitochondria. Complementary DNA sequence of its import precursor cloned with the aid of the polymerase chain reaction.</title>
        <authorList>
            <person name="Runswick M.J."/>
            <person name="Medd S.M."/>
            <person name="Walker J.E."/>
        </authorList>
    </citation>
    <scope>NUCLEOTIDE SEQUENCE [MRNA]</scope>
    <source>
        <tissue>Heart muscle</tissue>
    </source>
</reference>
<reference key="2">
    <citation type="submission" date="2007-06" db="EMBL/GenBank/DDBJ databases">
        <authorList>
            <consortium name="NIH - Mammalian Gene Collection (MGC) project"/>
        </authorList>
    </citation>
    <scope>NUCLEOTIDE SEQUENCE [LARGE SCALE MRNA]</scope>
    <source>
        <strain>Hereford</strain>
        <tissue>Uterus</tissue>
    </source>
</reference>
<reference key="3">
    <citation type="journal article" date="1985" name="J. Mol. Biol.">
        <title>Primary structure and subunit stoichiometry of F1-ATPase from bovine mitochondria.</title>
        <authorList>
            <person name="Walker J.E."/>
            <person name="Fearnley I.M."/>
            <person name="Gay N.J."/>
            <person name="Gibson B.W."/>
            <person name="Northrop F.D."/>
            <person name="Powell S.J."/>
            <person name="Runswick M.J."/>
            <person name="Saraste M."/>
            <person name="Tybulewicz V.L.J."/>
        </authorList>
    </citation>
    <scope>PROTEIN SEQUENCE OF 23-168</scope>
</reference>
<reference key="4">
    <citation type="journal article" date="1991" name="Biochemistry">
        <title>Identification of the subunits of F1F0-ATPase from bovine heart mitochondria.</title>
        <authorList>
            <person name="Walker J.E."/>
            <person name="Lutter R."/>
            <person name="Dupuis A."/>
            <person name="Runswick M.J."/>
        </authorList>
    </citation>
    <scope>PROTEIN SEQUENCE OF 23-31</scope>
    <source>
        <tissue>Heart</tissue>
    </source>
</reference>
<reference key="5">
    <citation type="journal article" date="2007" name="FEBS Lett.">
        <title>Association of two proteolipids of unknown function with ATP synthase from bovine heart mitochondria.</title>
        <authorList>
            <person name="Chen R."/>
            <person name="Runswick M.J."/>
            <person name="Carroll J."/>
            <person name="Fearnley I.M."/>
            <person name="Walker J.E."/>
        </authorList>
    </citation>
    <scope>IDENTIFICATION IN THE ATP SYNTHASE COMPLEX</scope>
</reference>
<reference key="6">
    <citation type="journal article" date="2015" name="J. Biol. Chem.">
        <title>Organization of Subunits in the Membrane Domain of the Bovine F-ATPase Revealed by Covalent Cross-linking.</title>
        <authorList>
            <person name="Lee J."/>
            <person name="Ding S."/>
            <person name="Walpole T.B."/>
            <person name="Holding A.N."/>
            <person name="Montgomery M.G."/>
            <person name="Fearnley I.M."/>
            <person name="Walker J.E."/>
        </authorList>
    </citation>
    <scope>IDENTIFICATION BY MASS SPECTROMETRY</scope>
    <scope>IDENTIFICATION IN THE ATP SYNTHASE COMPLEX</scope>
</reference>
<reference key="7">
    <citation type="journal article" date="1994" name="Nature">
        <title>Structure at 2.8-A resolution of F1-ATPase from bovine heart mitochondria.</title>
        <authorList>
            <person name="Abrahams J.P."/>
            <person name="Leslie A.G.W."/>
            <person name="Lutter R."/>
            <person name="Walker J.E."/>
        </authorList>
    </citation>
    <scope>X-RAY CRYSTALLOGRAPHY (2.8 ANGSTROMS)</scope>
</reference>
<reference key="8">
    <citation type="journal article" date="2007" name="Proc. Natl. Acad. Sci. U.S.A.">
        <title>How the regulatory protein, IF(1), inhibits F(1)-ATPase from bovine mitochondria.</title>
        <authorList>
            <person name="Gledhill J.R."/>
            <person name="Montgomery M.G."/>
            <person name="Leslie A.G."/>
            <person name="Walker J.E."/>
        </authorList>
    </citation>
    <scope>X-RAY CRYSTALLOGRAPHY (2.1 ANGSTROMS) OF 23-168 IN COMPLEX WITH ATPIF1; ATP5F1A; ATP5F1B; ATP5F1C AND ATP5F1E</scope>
</reference>
<keyword id="KW-0002">3D-structure</keyword>
<keyword id="KW-0007">Acetylation</keyword>
<keyword id="KW-0066">ATP synthesis</keyword>
<keyword id="KW-0139">CF(1)</keyword>
<keyword id="KW-0903">Direct protein sequencing</keyword>
<keyword id="KW-0375">Hydrogen ion transport</keyword>
<keyword id="KW-0406">Ion transport</keyword>
<keyword id="KW-0472">Membrane</keyword>
<keyword id="KW-0496">Mitochondrion</keyword>
<keyword id="KW-0999">Mitochondrion inner membrane</keyword>
<keyword id="KW-1185">Reference proteome</keyword>
<keyword id="KW-0809">Transit peptide</keyword>
<keyword id="KW-0813">Transport</keyword>
<name>ATPD_BOVIN</name>
<protein>
    <recommendedName>
        <fullName evidence="2">ATP synthase F(1) complex subunit delta, mitochondrial</fullName>
    </recommendedName>
    <alternativeName>
        <fullName evidence="2">ATP synthase F1 subunit delta</fullName>
    </alternativeName>
    <alternativeName>
        <fullName>F-ATPase delta subunit</fullName>
    </alternativeName>
</protein>
<evidence type="ECO:0000250" key="1">
    <source>
        <dbReference type="UniProtKB" id="P19483"/>
    </source>
</evidence>
<evidence type="ECO:0000250" key="2">
    <source>
        <dbReference type="UniProtKB" id="P30049"/>
    </source>
</evidence>
<evidence type="ECO:0000250" key="3">
    <source>
        <dbReference type="UniProtKB" id="Q9D3D9"/>
    </source>
</evidence>
<evidence type="ECO:0000269" key="4">
    <source>
    </source>
</evidence>
<evidence type="ECO:0000269" key="5">
    <source>
    </source>
</evidence>
<evidence type="ECO:0000269" key="6">
    <source>
    </source>
</evidence>
<evidence type="ECO:0000269" key="7">
    <source>
    </source>
</evidence>
<evidence type="ECO:0000269" key="8">
    <source>
    </source>
</evidence>
<evidence type="ECO:0000305" key="9"/>
<evidence type="ECO:0007829" key="10">
    <source>
        <dbReference type="PDB" id="6YY0"/>
    </source>
</evidence>
<evidence type="ECO:0007829" key="11">
    <source>
        <dbReference type="PDB" id="6ZG7"/>
    </source>
</evidence>
<proteinExistence type="evidence at protein level"/>
<organism>
    <name type="scientific">Bos taurus</name>
    <name type="common">Bovine</name>
    <dbReference type="NCBI Taxonomy" id="9913"/>
    <lineage>
        <taxon>Eukaryota</taxon>
        <taxon>Metazoa</taxon>
        <taxon>Chordata</taxon>
        <taxon>Craniata</taxon>
        <taxon>Vertebrata</taxon>
        <taxon>Euteleostomi</taxon>
        <taxon>Mammalia</taxon>
        <taxon>Eutheria</taxon>
        <taxon>Laurasiatheria</taxon>
        <taxon>Artiodactyla</taxon>
        <taxon>Ruminantia</taxon>
        <taxon>Pecora</taxon>
        <taxon>Bovidae</taxon>
        <taxon>Bovinae</taxon>
        <taxon>Bos</taxon>
    </lineage>
</organism>